<feature type="transit peptide" description="Chloroplast" evidence="2">
    <location>
        <begin position="1"/>
        <end status="unknown"/>
    </location>
</feature>
<feature type="chain" id="PRO_0000376077" description="Protochlorophyllide reductase B, chloroplastic">
    <location>
        <begin status="unknown"/>
        <end position="402"/>
    </location>
</feature>
<feature type="splice variant" id="VSP_037403" description="In isoform 2." evidence="3">
    <location>
        <begin position="1"/>
        <end position="114"/>
    </location>
</feature>
<protein>
    <recommendedName>
        <fullName>Protochlorophyllide reductase B, chloroplastic</fullName>
        <shortName>PCR B</shortName>
        <ecNumber>1.3.1.33</ecNumber>
    </recommendedName>
    <alternativeName>
        <fullName>NADPH-protochlorophyllide oxidoreductase B</fullName>
        <shortName>POR B</shortName>
    </alternativeName>
</protein>
<comment type="function">
    <text>Phototransformation of protochlorophyllide (Pchlide) to chlorophyllide (Chlide).</text>
</comment>
<comment type="catalytic activity">
    <reaction>
        <text>chlorophyllide a + NADP(+) = protochlorophyllide a + NADPH + H(+)</text>
        <dbReference type="Rhea" id="RHEA:11132"/>
        <dbReference type="ChEBI" id="CHEBI:15378"/>
        <dbReference type="ChEBI" id="CHEBI:57783"/>
        <dbReference type="ChEBI" id="CHEBI:58349"/>
        <dbReference type="ChEBI" id="CHEBI:83348"/>
        <dbReference type="ChEBI" id="CHEBI:83350"/>
        <dbReference type="EC" id="1.3.1.33"/>
    </reaction>
</comment>
<comment type="pathway">
    <text>Porphyrin-containing compound metabolism; chlorophyll biosynthesis.</text>
</comment>
<comment type="subcellular location">
    <subcellularLocation>
        <location evidence="1">Plastid</location>
        <location evidence="1">Chloroplast</location>
    </subcellularLocation>
</comment>
<comment type="alternative products">
    <event type="alternative splicing"/>
    <isoform>
        <id>Q8W3D9-1</id>
        <name>1</name>
        <sequence type="displayed"/>
    </isoform>
    <isoform>
        <id>Q8W3D9-2</id>
        <name>2</name>
        <sequence type="described" ref="VSP_037403"/>
    </isoform>
</comment>
<comment type="similarity">
    <text evidence="4">Belongs to the short-chain dehydrogenases/reductases (SDR) family. POR subfamily.</text>
</comment>
<organism>
    <name type="scientific">Oryza sativa subsp. japonica</name>
    <name type="common">Rice</name>
    <dbReference type="NCBI Taxonomy" id="39947"/>
    <lineage>
        <taxon>Eukaryota</taxon>
        <taxon>Viridiplantae</taxon>
        <taxon>Streptophyta</taxon>
        <taxon>Embryophyta</taxon>
        <taxon>Tracheophyta</taxon>
        <taxon>Spermatophyta</taxon>
        <taxon>Magnoliopsida</taxon>
        <taxon>Liliopsida</taxon>
        <taxon>Poales</taxon>
        <taxon>Poaceae</taxon>
        <taxon>BOP clade</taxon>
        <taxon>Oryzoideae</taxon>
        <taxon>Oryzeae</taxon>
        <taxon>Oryzinae</taxon>
        <taxon>Oryza</taxon>
        <taxon>Oryza sativa</taxon>
    </lineage>
</organism>
<reference key="1">
    <citation type="journal article" date="2003" name="Science">
        <title>In-depth view of structure, activity, and evolution of rice chromosome 10.</title>
        <authorList>
            <person name="Yu Y."/>
            <person name="Rambo T."/>
            <person name="Currie J."/>
            <person name="Saski C."/>
            <person name="Kim H.-R."/>
            <person name="Collura K."/>
            <person name="Thompson S."/>
            <person name="Simmons J."/>
            <person name="Yang T.-J."/>
            <person name="Nah G."/>
            <person name="Patel A.J."/>
            <person name="Thurmond S."/>
            <person name="Henry D."/>
            <person name="Oates R."/>
            <person name="Palmer M."/>
            <person name="Pries G."/>
            <person name="Gibson J."/>
            <person name="Anderson H."/>
            <person name="Paradkar M."/>
            <person name="Crane L."/>
            <person name="Dale J."/>
            <person name="Carver M.B."/>
            <person name="Wood T."/>
            <person name="Frisch D."/>
            <person name="Engler F."/>
            <person name="Soderlund C."/>
            <person name="Palmer L.E."/>
            <person name="Teytelman L."/>
            <person name="Nascimento L."/>
            <person name="De la Bastide M."/>
            <person name="Spiegel L."/>
            <person name="Ware D."/>
            <person name="O'Shaughnessy A."/>
            <person name="Dike S."/>
            <person name="Dedhia N."/>
            <person name="Preston R."/>
            <person name="Huang E."/>
            <person name="Ferraro K."/>
            <person name="Kuit K."/>
            <person name="Miller B."/>
            <person name="Zutavern T."/>
            <person name="Katzenberger F."/>
            <person name="Muller S."/>
            <person name="Balija V."/>
            <person name="Martienssen R.A."/>
            <person name="Stein L."/>
            <person name="Minx P."/>
            <person name="Johnson D."/>
            <person name="Cordum H."/>
            <person name="Mardis E."/>
            <person name="Cheng Z."/>
            <person name="Jiang J."/>
            <person name="Wilson R."/>
            <person name="McCombie W.R."/>
            <person name="Wing R.A."/>
            <person name="Yuan Q."/>
            <person name="Ouyang S."/>
            <person name="Liu J."/>
            <person name="Jones K.M."/>
            <person name="Gansberger K."/>
            <person name="Moffat K."/>
            <person name="Hill J."/>
            <person name="Tsitrin T."/>
            <person name="Overton L."/>
            <person name="Bera J."/>
            <person name="Kim M."/>
            <person name="Jin S."/>
            <person name="Tallon L."/>
            <person name="Ciecko A."/>
            <person name="Pai G."/>
            <person name="Van Aken S."/>
            <person name="Utterback T."/>
            <person name="Reidmuller S."/>
            <person name="Bormann J."/>
            <person name="Feldblyum T."/>
            <person name="Hsiao J."/>
            <person name="Zismann V."/>
            <person name="Blunt S."/>
            <person name="de Vazeille A.R."/>
            <person name="Shaffer T."/>
            <person name="Koo H."/>
            <person name="Suh B."/>
            <person name="Yang Q."/>
            <person name="Haas B."/>
            <person name="Peterson J."/>
            <person name="Pertea M."/>
            <person name="Volfovsky N."/>
            <person name="Wortman J."/>
            <person name="White O."/>
            <person name="Salzberg S.L."/>
            <person name="Fraser C.M."/>
            <person name="Buell C.R."/>
            <person name="Messing J."/>
            <person name="Song R."/>
            <person name="Fuks G."/>
            <person name="Llaca V."/>
            <person name="Kovchak S."/>
            <person name="Young S."/>
            <person name="Bowers J.E."/>
            <person name="Paterson A.H."/>
            <person name="Johns M.A."/>
            <person name="Mao L."/>
            <person name="Pan H."/>
            <person name="Dean R.A."/>
        </authorList>
    </citation>
    <scope>NUCLEOTIDE SEQUENCE [LARGE SCALE GENOMIC DNA]</scope>
    <source>
        <strain>cv. Nipponbare</strain>
    </source>
</reference>
<reference key="2">
    <citation type="journal article" date="2005" name="Nature">
        <title>The map-based sequence of the rice genome.</title>
        <authorList>
            <consortium name="International rice genome sequencing project (IRGSP)"/>
        </authorList>
    </citation>
    <scope>NUCLEOTIDE SEQUENCE [LARGE SCALE GENOMIC DNA]</scope>
    <source>
        <strain>cv. Nipponbare</strain>
    </source>
</reference>
<reference key="3">
    <citation type="journal article" date="2008" name="Nucleic Acids Res.">
        <title>The rice annotation project database (RAP-DB): 2008 update.</title>
        <authorList>
            <consortium name="The rice annotation project (RAP)"/>
        </authorList>
    </citation>
    <scope>GENOME REANNOTATION</scope>
    <source>
        <strain>cv. Nipponbare</strain>
    </source>
</reference>
<reference key="4">
    <citation type="journal article" date="2013" name="Rice">
        <title>Improvement of the Oryza sativa Nipponbare reference genome using next generation sequence and optical map data.</title>
        <authorList>
            <person name="Kawahara Y."/>
            <person name="de la Bastide M."/>
            <person name="Hamilton J.P."/>
            <person name="Kanamori H."/>
            <person name="McCombie W.R."/>
            <person name="Ouyang S."/>
            <person name="Schwartz D.C."/>
            <person name="Tanaka T."/>
            <person name="Wu J."/>
            <person name="Zhou S."/>
            <person name="Childs K.L."/>
            <person name="Davidson R.M."/>
            <person name="Lin H."/>
            <person name="Quesada-Ocampo L."/>
            <person name="Vaillancourt B."/>
            <person name="Sakai H."/>
            <person name="Lee S.S."/>
            <person name="Kim J."/>
            <person name="Numa H."/>
            <person name="Itoh T."/>
            <person name="Buell C.R."/>
            <person name="Matsumoto T."/>
        </authorList>
    </citation>
    <scope>GENOME REANNOTATION</scope>
    <source>
        <strain>cv. Nipponbare</strain>
    </source>
</reference>
<reference key="5">
    <citation type="journal article" date="2003" name="Science">
        <title>Collection, mapping, and annotation of over 28,000 cDNA clones from japonica rice.</title>
        <authorList>
            <consortium name="The rice full-length cDNA consortium"/>
        </authorList>
    </citation>
    <scope>NUCLEOTIDE SEQUENCE [LARGE SCALE MRNA] (ISOFORM 2)</scope>
    <source>
        <strain>cv. Nipponbare</strain>
    </source>
</reference>
<evidence type="ECO:0000250" key="1"/>
<evidence type="ECO:0000255" key="2"/>
<evidence type="ECO:0000303" key="3">
    <source>
    </source>
</evidence>
<evidence type="ECO:0000305" key="4"/>
<gene>
    <name type="primary">PORB</name>
    <name type="ordered locus">Os10g0496900</name>
    <name type="ordered locus">LOC_Os10g35370</name>
    <name type="ORF">OSJNBa0017E08.8</name>
</gene>
<sequence>MALQAATTTSFLPSALSARKEGAVKDSAFLGVRLGDGLKLETSALGLRTKRVSTSSVAIRAQASAAVSSPTVTPASPSGKQTLRKGTAVITGASSGLGLATAKALAETGRWHVVMGCRDFLKASRAAKAAGMEKGSYTIVHLDLASLDSVRQFVANVRRLEMPVDVVVCNAAVYQPTAKQPSFTADGFEMSVGVNHLGHFLLARELLADLTSSDYPSKRLIIVGSITGNTNTLAGNVPPKANLGDLRGLASGLDGVSSSAMIDGGEFDGAKAYKDSKVCNMLTMQEFHRRYHGETGVTFASLYPGCIATTGLFREHVPLFRLLFPPFQKYITKGYVSEEEAGKRLAQVVSDPSLTKSGVYWSWNNNSASFENQLSEEASDPEKAKKVWELSEKLVGLADHDQ</sequence>
<name>PORB_ORYSJ</name>
<keyword id="KW-0025">Alternative splicing</keyword>
<keyword id="KW-0149">Chlorophyll biosynthesis</keyword>
<keyword id="KW-0150">Chloroplast</keyword>
<keyword id="KW-0521">NADP</keyword>
<keyword id="KW-0560">Oxidoreductase</keyword>
<keyword id="KW-0602">Photosynthesis</keyword>
<keyword id="KW-0934">Plastid</keyword>
<keyword id="KW-1185">Reference proteome</keyword>
<keyword id="KW-0809">Transit peptide</keyword>
<proteinExistence type="evidence at transcript level"/>
<accession>Q8W3D9</accession>
<accession>A0A0P0XWE3</accession>
<accession>Q337H5</accession>
<accession>Q7XD32</accession>
<dbReference type="EC" id="1.3.1.33"/>
<dbReference type="EMBL" id="AC068923">
    <property type="protein sequence ID" value="AAL58280.1"/>
    <property type="molecule type" value="Genomic_DNA"/>
</dbReference>
<dbReference type="EMBL" id="DP000086">
    <property type="protein sequence ID" value="AAP54438.1"/>
    <property type="molecule type" value="Genomic_DNA"/>
</dbReference>
<dbReference type="EMBL" id="DP000086">
    <property type="protein sequence ID" value="ABB47824.1"/>
    <property type="molecule type" value="Genomic_DNA"/>
</dbReference>
<dbReference type="EMBL" id="AP008216">
    <property type="protein sequence ID" value="BAF26869.1"/>
    <property type="molecule type" value="Genomic_DNA"/>
</dbReference>
<dbReference type="EMBL" id="AP014966">
    <property type="protein sequence ID" value="BAT11485.1"/>
    <property type="molecule type" value="Genomic_DNA"/>
</dbReference>
<dbReference type="EMBL" id="AK068143">
    <property type="protein sequence ID" value="BAG90777.1"/>
    <property type="molecule type" value="mRNA"/>
</dbReference>
<dbReference type="RefSeq" id="XP_015614945.1">
    <property type="nucleotide sequence ID" value="XM_015759459.1"/>
</dbReference>
<dbReference type="SMR" id="Q8W3D9"/>
<dbReference type="FunCoup" id="Q8W3D9">
    <property type="interactions" value="689"/>
</dbReference>
<dbReference type="STRING" id="39947.Q8W3D9"/>
<dbReference type="PaxDb" id="39947-Q8W3D9"/>
<dbReference type="EnsemblPlants" id="Os10t0496900-02">
    <molecule id="Q8W3D9-1"/>
    <property type="protein sequence ID" value="Os10t0496900-02"/>
    <property type="gene ID" value="Os10g0496900"/>
</dbReference>
<dbReference type="Gramene" id="Os10t0496900-02">
    <molecule id="Q8W3D9-1"/>
    <property type="protein sequence ID" value="Os10t0496900-02"/>
    <property type="gene ID" value="Os10g0496900"/>
</dbReference>
<dbReference type="KEGG" id="dosa:Os10g0496900"/>
<dbReference type="InParanoid" id="Q8W3D9"/>
<dbReference type="OrthoDB" id="191139at2759"/>
<dbReference type="BRENDA" id="1.3.1.33">
    <property type="organism ID" value="8948"/>
</dbReference>
<dbReference type="UniPathway" id="UPA00668"/>
<dbReference type="Proteomes" id="UP000000763">
    <property type="component" value="Chromosome 10"/>
</dbReference>
<dbReference type="Proteomes" id="UP000059680">
    <property type="component" value="Chromosome 10"/>
</dbReference>
<dbReference type="ExpressionAtlas" id="Q8W3D9">
    <property type="expression patterns" value="baseline and differential"/>
</dbReference>
<dbReference type="GO" id="GO:0009507">
    <property type="term" value="C:chloroplast"/>
    <property type="evidence" value="ECO:0007669"/>
    <property type="project" value="UniProtKB-SubCell"/>
</dbReference>
<dbReference type="GO" id="GO:0016630">
    <property type="term" value="F:protochlorophyllide reductase activity"/>
    <property type="evidence" value="ECO:0007669"/>
    <property type="project" value="UniProtKB-EC"/>
</dbReference>
<dbReference type="GO" id="GO:0015995">
    <property type="term" value="P:chlorophyll biosynthetic process"/>
    <property type="evidence" value="ECO:0007669"/>
    <property type="project" value="UniProtKB-UniPathway"/>
</dbReference>
<dbReference type="GO" id="GO:0015979">
    <property type="term" value="P:photosynthesis"/>
    <property type="evidence" value="ECO:0007669"/>
    <property type="project" value="UniProtKB-KW"/>
</dbReference>
<dbReference type="CDD" id="cd09810">
    <property type="entry name" value="LPOR_like_SDR_c_like"/>
    <property type="match status" value="1"/>
</dbReference>
<dbReference type="Gene3D" id="3.40.50.720">
    <property type="entry name" value="NAD(P)-binding Rossmann-like Domain"/>
    <property type="match status" value="1"/>
</dbReference>
<dbReference type="InterPro" id="IPR036291">
    <property type="entry name" value="NAD(P)-bd_dom_sf"/>
</dbReference>
<dbReference type="InterPro" id="IPR005979">
    <property type="entry name" value="Prochl_reduct"/>
</dbReference>
<dbReference type="InterPro" id="IPR002347">
    <property type="entry name" value="SDR_fam"/>
</dbReference>
<dbReference type="NCBIfam" id="TIGR01289">
    <property type="entry name" value="LPOR"/>
    <property type="match status" value="1"/>
</dbReference>
<dbReference type="PANTHER" id="PTHR44419">
    <property type="entry name" value="PROTOCHLOROPHYLLIDE REDUCTASE C, CHLOROPLASTIC"/>
    <property type="match status" value="1"/>
</dbReference>
<dbReference type="PANTHER" id="PTHR44419:SF20">
    <property type="entry name" value="PROTOCHLOROPHYLLIDE REDUCTASE C, CHLOROPLASTIC"/>
    <property type="match status" value="1"/>
</dbReference>
<dbReference type="Pfam" id="PF00106">
    <property type="entry name" value="adh_short"/>
    <property type="match status" value="1"/>
</dbReference>
<dbReference type="PRINTS" id="PR00081">
    <property type="entry name" value="GDHRDH"/>
</dbReference>
<dbReference type="SUPFAM" id="SSF51735">
    <property type="entry name" value="NAD(P)-binding Rossmann-fold domains"/>
    <property type="match status" value="1"/>
</dbReference>